<gene>
    <name type="ORF">SPAC1399.04c</name>
</gene>
<name>UPP2_SCHPO</name>
<organism>
    <name type="scientific">Schizosaccharomyces pombe (strain 972 / ATCC 24843)</name>
    <name type="common">Fission yeast</name>
    <dbReference type="NCBI Taxonomy" id="284812"/>
    <lineage>
        <taxon>Eukaryota</taxon>
        <taxon>Fungi</taxon>
        <taxon>Dikarya</taxon>
        <taxon>Ascomycota</taxon>
        <taxon>Taphrinomycotina</taxon>
        <taxon>Schizosaccharomycetes</taxon>
        <taxon>Schizosaccharomycetales</taxon>
        <taxon>Schizosaccharomycetaceae</taxon>
        <taxon>Schizosaccharomyces</taxon>
    </lineage>
</organism>
<protein>
    <recommendedName>
        <fullName>Uracil phosphoribosyltransferase 2</fullName>
        <shortName>UPRTase 2</shortName>
        <ecNumber>2.4.2.9</ecNumber>
    </recommendedName>
    <alternativeName>
        <fullName>UMP pyrophosphorylase 2</fullName>
    </alternativeName>
</protein>
<dbReference type="EC" id="2.4.2.9"/>
<dbReference type="EMBL" id="CU329670">
    <property type="protein sequence ID" value="CAC19743.1"/>
    <property type="molecule type" value="Genomic_DNA"/>
</dbReference>
<dbReference type="SMR" id="Q9HE15"/>
<dbReference type="BioGRID" id="279068">
    <property type="interactions" value="30"/>
</dbReference>
<dbReference type="FunCoup" id="Q9HE15">
    <property type="interactions" value="469"/>
</dbReference>
<dbReference type="STRING" id="284812.Q9HE15"/>
<dbReference type="PaxDb" id="4896-SPAC1399.04c.1"/>
<dbReference type="EnsemblFungi" id="SPAC1399.04c.1">
    <property type="protein sequence ID" value="SPAC1399.04c.1:pep"/>
    <property type="gene ID" value="SPAC1399.04c"/>
</dbReference>
<dbReference type="KEGG" id="spo:2542614"/>
<dbReference type="PomBase" id="SPAC1399.04c"/>
<dbReference type="VEuPathDB" id="FungiDB:SPAC1399.04c"/>
<dbReference type="eggNOG" id="KOG4203">
    <property type="taxonomic scope" value="Eukaryota"/>
</dbReference>
<dbReference type="HOGENOM" id="CLU_067096_1_1_1"/>
<dbReference type="InParanoid" id="Q9HE15"/>
<dbReference type="OMA" id="AGACMEQ"/>
<dbReference type="PhylomeDB" id="Q9HE15"/>
<dbReference type="UniPathway" id="UPA00574">
    <property type="reaction ID" value="UER00636"/>
</dbReference>
<dbReference type="PRO" id="PR:Q9HE15"/>
<dbReference type="Proteomes" id="UP000002485">
    <property type="component" value="Chromosome I"/>
</dbReference>
<dbReference type="GO" id="GO:0005737">
    <property type="term" value="C:cytoplasm"/>
    <property type="evidence" value="ECO:0000318"/>
    <property type="project" value="GO_Central"/>
</dbReference>
<dbReference type="GO" id="GO:0005829">
    <property type="term" value="C:cytosol"/>
    <property type="evidence" value="ECO:0007005"/>
    <property type="project" value="PomBase"/>
</dbReference>
<dbReference type="GO" id="GO:0005634">
    <property type="term" value="C:nucleus"/>
    <property type="evidence" value="ECO:0007005"/>
    <property type="project" value="PomBase"/>
</dbReference>
<dbReference type="GO" id="GO:0005525">
    <property type="term" value="F:GTP binding"/>
    <property type="evidence" value="ECO:0007669"/>
    <property type="project" value="UniProtKB-KW"/>
</dbReference>
<dbReference type="GO" id="GO:0004845">
    <property type="term" value="F:uracil phosphoribosyltransferase activity"/>
    <property type="evidence" value="ECO:0000318"/>
    <property type="project" value="GO_Central"/>
</dbReference>
<dbReference type="GO" id="GO:0008655">
    <property type="term" value="P:pyrimidine-containing compound salvage"/>
    <property type="evidence" value="ECO:0000315"/>
    <property type="project" value="PomBase"/>
</dbReference>
<dbReference type="GO" id="GO:0044206">
    <property type="term" value="P:UMP salvage"/>
    <property type="evidence" value="ECO:0007669"/>
    <property type="project" value="UniProtKB-UniPathway"/>
</dbReference>
<dbReference type="CDD" id="cd06223">
    <property type="entry name" value="PRTases_typeI"/>
    <property type="match status" value="1"/>
</dbReference>
<dbReference type="FunFam" id="3.40.50.2020:FF:000023">
    <property type="entry name" value="Probable uracil phosphoribosyltransferase"/>
    <property type="match status" value="1"/>
</dbReference>
<dbReference type="Gene3D" id="3.40.50.2020">
    <property type="match status" value="1"/>
</dbReference>
<dbReference type="InterPro" id="IPR000836">
    <property type="entry name" value="PRibTrfase_dom"/>
</dbReference>
<dbReference type="InterPro" id="IPR029057">
    <property type="entry name" value="PRTase-like"/>
</dbReference>
<dbReference type="NCBIfam" id="NF001097">
    <property type="entry name" value="PRK00129.1"/>
    <property type="match status" value="1"/>
</dbReference>
<dbReference type="Pfam" id="PF14681">
    <property type="entry name" value="UPRTase"/>
    <property type="match status" value="1"/>
</dbReference>
<dbReference type="SUPFAM" id="SSF53271">
    <property type="entry name" value="PRTase-like"/>
    <property type="match status" value="1"/>
</dbReference>
<reference key="1">
    <citation type="journal article" date="2002" name="Nature">
        <title>The genome sequence of Schizosaccharomyces pombe.</title>
        <authorList>
            <person name="Wood V."/>
            <person name="Gwilliam R."/>
            <person name="Rajandream M.A."/>
            <person name="Lyne M.H."/>
            <person name="Lyne R."/>
            <person name="Stewart A."/>
            <person name="Sgouros J.G."/>
            <person name="Peat N."/>
            <person name="Hayles J."/>
            <person name="Baker S.G."/>
            <person name="Basham D."/>
            <person name="Bowman S."/>
            <person name="Brooks K."/>
            <person name="Brown D."/>
            <person name="Brown S."/>
            <person name="Chillingworth T."/>
            <person name="Churcher C.M."/>
            <person name="Collins M."/>
            <person name="Connor R."/>
            <person name="Cronin A."/>
            <person name="Davis P."/>
            <person name="Feltwell T."/>
            <person name="Fraser A."/>
            <person name="Gentles S."/>
            <person name="Goble A."/>
            <person name="Hamlin N."/>
            <person name="Harris D.E."/>
            <person name="Hidalgo J."/>
            <person name="Hodgson G."/>
            <person name="Holroyd S."/>
            <person name="Hornsby T."/>
            <person name="Howarth S."/>
            <person name="Huckle E.J."/>
            <person name="Hunt S."/>
            <person name="Jagels K."/>
            <person name="James K.D."/>
            <person name="Jones L."/>
            <person name="Jones M."/>
            <person name="Leather S."/>
            <person name="McDonald S."/>
            <person name="McLean J."/>
            <person name="Mooney P."/>
            <person name="Moule S."/>
            <person name="Mungall K.L."/>
            <person name="Murphy L.D."/>
            <person name="Niblett D."/>
            <person name="Odell C."/>
            <person name="Oliver K."/>
            <person name="O'Neil S."/>
            <person name="Pearson D."/>
            <person name="Quail M.A."/>
            <person name="Rabbinowitsch E."/>
            <person name="Rutherford K.M."/>
            <person name="Rutter S."/>
            <person name="Saunders D."/>
            <person name="Seeger K."/>
            <person name="Sharp S."/>
            <person name="Skelton J."/>
            <person name="Simmonds M.N."/>
            <person name="Squares R."/>
            <person name="Squares S."/>
            <person name="Stevens K."/>
            <person name="Taylor K."/>
            <person name="Taylor R.G."/>
            <person name="Tivey A."/>
            <person name="Walsh S.V."/>
            <person name="Warren T."/>
            <person name="Whitehead S."/>
            <person name="Woodward J.R."/>
            <person name="Volckaert G."/>
            <person name="Aert R."/>
            <person name="Robben J."/>
            <person name="Grymonprez B."/>
            <person name="Weltjens I."/>
            <person name="Vanstreels E."/>
            <person name="Rieger M."/>
            <person name="Schaefer M."/>
            <person name="Mueller-Auer S."/>
            <person name="Gabel C."/>
            <person name="Fuchs M."/>
            <person name="Duesterhoeft A."/>
            <person name="Fritzc C."/>
            <person name="Holzer E."/>
            <person name="Moestl D."/>
            <person name="Hilbert H."/>
            <person name="Borzym K."/>
            <person name="Langer I."/>
            <person name="Beck A."/>
            <person name="Lehrach H."/>
            <person name="Reinhardt R."/>
            <person name="Pohl T.M."/>
            <person name="Eger P."/>
            <person name="Zimmermann W."/>
            <person name="Wedler H."/>
            <person name="Wambutt R."/>
            <person name="Purnelle B."/>
            <person name="Goffeau A."/>
            <person name="Cadieu E."/>
            <person name="Dreano S."/>
            <person name="Gloux S."/>
            <person name="Lelaure V."/>
            <person name="Mottier S."/>
            <person name="Galibert F."/>
            <person name="Aves S.J."/>
            <person name="Xiang Z."/>
            <person name="Hunt C."/>
            <person name="Moore K."/>
            <person name="Hurst S.M."/>
            <person name="Lucas M."/>
            <person name="Rochet M."/>
            <person name="Gaillardin C."/>
            <person name="Tallada V.A."/>
            <person name="Garzon A."/>
            <person name="Thode G."/>
            <person name="Daga R.R."/>
            <person name="Cruzado L."/>
            <person name="Jimenez J."/>
            <person name="Sanchez M."/>
            <person name="del Rey F."/>
            <person name="Benito J."/>
            <person name="Dominguez A."/>
            <person name="Revuelta J.L."/>
            <person name="Moreno S."/>
            <person name="Armstrong J."/>
            <person name="Forsburg S.L."/>
            <person name="Cerutti L."/>
            <person name="Lowe T."/>
            <person name="McCombie W.R."/>
            <person name="Paulsen I."/>
            <person name="Potashkin J."/>
            <person name="Shpakovski G.V."/>
            <person name="Ussery D."/>
            <person name="Barrell B.G."/>
            <person name="Nurse P."/>
        </authorList>
    </citation>
    <scope>NUCLEOTIDE SEQUENCE [LARGE SCALE GENOMIC DNA]</scope>
    <source>
        <strain>972 / ATCC 24843</strain>
    </source>
</reference>
<sequence>MSIPLEQPENVVVLRQTMYLLSLMTILRDQQTGHSEFVRTANLIINMLMQEALSALPYKKCLIKTSSGGTYTGVQPARDICGVSILRAGESMEYGLAAACNYSVPVGKLLVQRDETTFEAKLMFCKLPKDAQDRLVLLLDPLLATGNSVILAIQTLINKGIPEENIVFVNLIACNEGITNVFAKFPKLRMVTASIDPELNANKYVVPGCGDFGDRYFGTC</sequence>
<feature type="chain" id="PRO_0000120787" description="Uracil phosphoribosyltransferase 2">
    <location>
        <begin position="1"/>
        <end position="220"/>
    </location>
</feature>
<feature type="binding site" evidence="2">
    <location>
        <begin position="77"/>
        <end position="80"/>
    </location>
    <ligand>
        <name>GTP</name>
        <dbReference type="ChEBI" id="CHEBI:37565"/>
    </ligand>
</feature>
<feature type="binding site" evidence="2">
    <location>
        <position position="87"/>
    </location>
    <ligand>
        <name>5-phospho-alpha-D-ribose 1-diphosphate</name>
        <dbReference type="ChEBI" id="CHEBI:58017"/>
    </ligand>
</feature>
<feature type="binding site" evidence="2">
    <location>
        <position position="113"/>
    </location>
    <ligand>
        <name>5-phospho-alpha-D-ribose 1-diphosphate</name>
        <dbReference type="ChEBI" id="CHEBI:58017"/>
    </ligand>
</feature>
<feature type="binding site" evidence="2">
    <location>
        <position position="134"/>
    </location>
    <ligand>
        <name>GTP</name>
        <dbReference type="ChEBI" id="CHEBI:37565"/>
    </ligand>
</feature>
<feature type="binding site" evidence="2">
    <location>
        <begin position="140"/>
        <end position="148"/>
    </location>
    <ligand>
        <name>5-phospho-alpha-D-ribose 1-diphosphate</name>
        <dbReference type="ChEBI" id="CHEBI:58017"/>
    </ligand>
</feature>
<feature type="binding site" evidence="2">
    <location>
        <position position="140"/>
    </location>
    <ligand>
        <name>5-phospho-alpha-D-ribose 1-diphosphate</name>
        <dbReference type="ChEBI" id="CHEBI:58017"/>
    </ligand>
</feature>
<feature type="binding site" evidence="1">
    <location>
        <position position="204"/>
    </location>
    <ligand>
        <name>D-ribose 5-phosphate</name>
        <dbReference type="ChEBI" id="CHEBI:78346"/>
    </ligand>
</feature>
<feature type="binding site" evidence="2">
    <location>
        <position position="205"/>
    </location>
    <ligand>
        <name>uracil</name>
        <dbReference type="ChEBI" id="CHEBI:17568"/>
    </ligand>
</feature>
<feature type="binding site" evidence="2">
    <location>
        <begin position="210"/>
        <end position="212"/>
    </location>
    <ligand>
        <name>uracil</name>
        <dbReference type="ChEBI" id="CHEBI:17568"/>
    </ligand>
</feature>
<feature type="binding site" evidence="1">
    <location>
        <position position="211"/>
    </location>
    <ligand>
        <name>5-phospho-alpha-D-ribose 1-diphosphate</name>
        <dbReference type="ChEBI" id="CHEBI:58017"/>
    </ligand>
</feature>
<accession>Q9HE15</accession>
<proteinExistence type="inferred from homology"/>
<keyword id="KW-0021">Allosteric enzyme</keyword>
<keyword id="KW-0328">Glycosyltransferase</keyword>
<keyword id="KW-0342">GTP-binding</keyword>
<keyword id="KW-0547">Nucleotide-binding</keyword>
<keyword id="KW-1185">Reference proteome</keyword>
<keyword id="KW-0808">Transferase</keyword>
<comment type="function">
    <text evidence="1">Catalyzes the conversion of uracil and 5-phospho-alpha-D-ribose 1-diphosphate (PRPP) to UMP and diphosphate.</text>
</comment>
<comment type="catalytic activity">
    <reaction>
        <text>UMP + diphosphate = 5-phospho-alpha-D-ribose 1-diphosphate + uracil</text>
        <dbReference type="Rhea" id="RHEA:13017"/>
        <dbReference type="ChEBI" id="CHEBI:17568"/>
        <dbReference type="ChEBI" id="CHEBI:33019"/>
        <dbReference type="ChEBI" id="CHEBI:57865"/>
        <dbReference type="ChEBI" id="CHEBI:58017"/>
        <dbReference type="EC" id="2.4.2.9"/>
    </reaction>
</comment>
<comment type="cofactor">
    <cofactor evidence="1">
        <name>Mg(2+)</name>
        <dbReference type="ChEBI" id="CHEBI:18420"/>
    </cofactor>
    <text evidence="1">Binds 1 Mg(2+) ion per subunit. The magnesium is bound as Mg-PRPP.</text>
</comment>
<comment type="activity regulation">
    <text evidence="1">Allosterically activated by GTP.</text>
</comment>
<comment type="pathway">
    <text>Pyrimidine metabolism; UMP biosynthesis via salvage pathway; UMP from uracil: step 1/1.</text>
</comment>
<comment type="similarity">
    <text evidence="3">Belongs to the UPRTase family.</text>
</comment>
<evidence type="ECO:0000250" key="1"/>
<evidence type="ECO:0000250" key="2">
    <source>
        <dbReference type="UniProtKB" id="Q26998"/>
    </source>
</evidence>
<evidence type="ECO:0000305" key="3"/>